<proteinExistence type="inferred from homology"/>
<feature type="chain" id="PRO_1000065022" description="UPF0291 protein CLI_2672">
    <location>
        <begin position="1"/>
        <end position="62"/>
    </location>
</feature>
<evidence type="ECO:0000255" key="1">
    <source>
        <dbReference type="HAMAP-Rule" id="MF_01103"/>
    </source>
</evidence>
<keyword id="KW-0963">Cytoplasm</keyword>
<accession>A7GGJ6</accession>
<reference key="1">
    <citation type="submission" date="2007-06" db="EMBL/GenBank/DDBJ databases">
        <authorList>
            <person name="Brinkac L.M."/>
            <person name="Daugherty S."/>
            <person name="Dodson R.J."/>
            <person name="Madupu R."/>
            <person name="Brown J.L."/>
            <person name="Bruce D."/>
            <person name="Detter C."/>
            <person name="Munk C."/>
            <person name="Smith L.A."/>
            <person name="Smith T.J."/>
            <person name="White O."/>
            <person name="Brettin T.S."/>
        </authorList>
    </citation>
    <scope>NUCLEOTIDE SEQUENCE [LARGE SCALE GENOMIC DNA]</scope>
    <source>
        <strain>Langeland / NCTC 10281 / Type F</strain>
    </source>
</reference>
<gene>
    <name type="ordered locus">CLI_2672</name>
</gene>
<protein>
    <recommendedName>
        <fullName evidence="1">UPF0291 protein CLI_2672</fullName>
    </recommendedName>
</protein>
<dbReference type="EMBL" id="CP000728">
    <property type="protein sequence ID" value="ABS40233.1"/>
    <property type="molecule type" value="Genomic_DNA"/>
</dbReference>
<dbReference type="RefSeq" id="WP_012100489.1">
    <property type="nucleotide sequence ID" value="NC_009699.1"/>
</dbReference>
<dbReference type="SMR" id="A7GGJ6"/>
<dbReference type="KEGG" id="cbf:CLI_2672"/>
<dbReference type="HOGENOM" id="CLU_173137_3_1_9"/>
<dbReference type="Proteomes" id="UP000002410">
    <property type="component" value="Chromosome"/>
</dbReference>
<dbReference type="GO" id="GO:0005737">
    <property type="term" value="C:cytoplasm"/>
    <property type="evidence" value="ECO:0007669"/>
    <property type="project" value="UniProtKB-SubCell"/>
</dbReference>
<dbReference type="Gene3D" id="1.10.287.540">
    <property type="entry name" value="Helix hairpin bin"/>
    <property type="match status" value="1"/>
</dbReference>
<dbReference type="HAMAP" id="MF_01103">
    <property type="entry name" value="UPF0291"/>
    <property type="match status" value="1"/>
</dbReference>
<dbReference type="InterPro" id="IPR009242">
    <property type="entry name" value="DUF896"/>
</dbReference>
<dbReference type="PANTHER" id="PTHR37300">
    <property type="entry name" value="UPF0291 PROTEIN CBO2609/CLC_2481"/>
    <property type="match status" value="1"/>
</dbReference>
<dbReference type="PANTHER" id="PTHR37300:SF1">
    <property type="entry name" value="UPF0291 PROTEIN YNZC"/>
    <property type="match status" value="1"/>
</dbReference>
<dbReference type="Pfam" id="PF05979">
    <property type="entry name" value="DUF896"/>
    <property type="match status" value="1"/>
</dbReference>
<dbReference type="SUPFAM" id="SSF158221">
    <property type="entry name" value="YnzC-like"/>
    <property type="match status" value="1"/>
</dbReference>
<organism>
    <name type="scientific">Clostridium botulinum (strain Langeland / NCTC 10281 / Type F)</name>
    <dbReference type="NCBI Taxonomy" id="441772"/>
    <lineage>
        <taxon>Bacteria</taxon>
        <taxon>Bacillati</taxon>
        <taxon>Bacillota</taxon>
        <taxon>Clostridia</taxon>
        <taxon>Eubacteriales</taxon>
        <taxon>Clostridiaceae</taxon>
        <taxon>Clostridium</taxon>
    </lineage>
</organism>
<sequence length="62" mass="7421">MDMKKLIERINFLYKKSKEEGLTEEEKVEQQKLRREYIDIIKGNVKVQLEGVEKIPTANRKN</sequence>
<comment type="subcellular location">
    <subcellularLocation>
        <location evidence="1">Cytoplasm</location>
    </subcellularLocation>
</comment>
<comment type="similarity">
    <text evidence="1">Belongs to the UPF0291 family.</text>
</comment>
<name>Y2672_CLOBL</name>